<keyword id="KW-0472">Membrane</keyword>
<keyword id="KW-1185">Reference proteome</keyword>
<keyword id="KW-0812">Transmembrane</keyword>
<keyword id="KW-1133">Transmembrane helix</keyword>
<sequence>MAWDLFLWIVSFFVSLALVASVFYQVICLTDLEADYLNPFETSTRINRLVIPEFILQGSLCLLFLLTWHWVFFLVAVPVTVYHAMLYKERRYLIDVTEVFRGISFEKKLRYTKLGFYVFLFIMVVFRLTLSAVYSFTEDDDLLHLF</sequence>
<organism>
    <name type="scientific">Arabidopsis thaliana</name>
    <name type="common">Mouse-ear cress</name>
    <dbReference type="NCBI Taxonomy" id="3702"/>
    <lineage>
        <taxon>Eukaryota</taxon>
        <taxon>Viridiplantae</taxon>
        <taxon>Streptophyta</taxon>
        <taxon>Embryophyta</taxon>
        <taxon>Tracheophyta</taxon>
        <taxon>Spermatophyta</taxon>
        <taxon>Magnoliopsida</taxon>
        <taxon>eudicotyledons</taxon>
        <taxon>Gunneridae</taxon>
        <taxon>Pentapetalae</taxon>
        <taxon>rosids</taxon>
        <taxon>malvids</taxon>
        <taxon>Brassicales</taxon>
        <taxon>Brassicaceae</taxon>
        <taxon>Camelineae</taxon>
        <taxon>Arabidopsis</taxon>
    </lineage>
</organism>
<feature type="chain" id="PRO_0000398826" description="Protein cornichon homolog 1">
    <location>
        <begin position="1"/>
        <end position="146"/>
    </location>
</feature>
<feature type="transmembrane region" description="Helical" evidence="1">
    <location>
        <begin position="9"/>
        <end position="29"/>
    </location>
</feature>
<feature type="transmembrane region" description="Helical" evidence="1">
    <location>
        <begin position="61"/>
        <end position="81"/>
    </location>
</feature>
<feature type="transmembrane region" description="Helical" evidence="1">
    <location>
        <begin position="114"/>
        <end position="134"/>
    </location>
</feature>
<dbReference type="EMBL" id="AC069472">
    <property type="protein sequence ID" value="AAG51073.1"/>
    <property type="molecule type" value="Genomic_DNA"/>
</dbReference>
<dbReference type="EMBL" id="CP002686">
    <property type="protein sequence ID" value="AEE75162.1"/>
    <property type="molecule type" value="Genomic_DNA"/>
</dbReference>
<dbReference type="EMBL" id="BT006194">
    <property type="protein sequence ID" value="AAP12843.1"/>
    <property type="molecule type" value="mRNA"/>
</dbReference>
<dbReference type="EMBL" id="AK227896">
    <property type="protein sequence ID" value="BAE99867.1"/>
    <property type="molecule type" value="mRNA"/>
</dbReference>
<dbReference type="RefSeq" id="NP_187825.1">
    <property type="nucleotide sequence ID" value="NM_112053.4"/>
</dbReference>
<dbReference type="SMR" id="Q9C7D7"/>
<dbReference type="BioGRID" id="5729">
    <property type="interactions" value="534"/>
</dbReference>
<dbReference type="FunCoup" id="Q9C7D7">
    <property type="interactions" value="3299"/>
</dbReference>
<dbReference type="IntAct" id="Q9C7D7">
    <property type="interactions" value="535"/>
</dbReference>
<dbReference type="STRING" id="3702.Q9C7D7"/>
<dbReference type="TCDB" id="8.A.61.1.9">
    <property type="family name" value="the endoplasmic reticulum-derived vesicle protein, erv14 (erv14) family"/>
</dbReference>
<dbReference type="PaxDb" id="3702-AT3G12180.1"/>
<dbReference type="ProteomicsDB" id="220299"/>
<dbReference type="EnsemblPlants" id="AT3G12180.1">
    <property type="protein sequence ID" value="AT3G12180.1"/>
    <property type="gene ID" value="AT3G12180"/>
</dbReference>
<dbReference type="GeneID" id="820395"/>
<dbReference type="Gramene" id="AT3G12180.1">
    <property type="protein sequence ID" value="AT3G12180.1"/>
    <property type="gene ID" value="AT3G12180"/>
</dbReference>
<dbReference type="KEGG" id="ath:AT3G12180"/>
<dbReference type="Araport" id="AT3G12180"/>
<dbReference type="TAIR" id="AT3G12180"/>
<dbReference type="eggNOG" id="KOG2729">
    <property type="taxonomic scope" value="Eukaryota"/>
</dbReference>
<dbReference type="HOGENOM" id="CLU_112942_3_0_1"/>
<dbReference type="InParanoid" id="Q9C7D7"/>
<dbReference type="OMA" id="YTVICVD"/>
<dbReference type="OrthoDB" id="434393at2759"/>
<dbReference type="PhylomeDB" id="Q9C7D7"/>
<dbReference type="PRO" id="PR:Q9C7D7"/>
<dbReference type="Proteomes" id="UP000006548">
    <property type="component" value="Chromosome 3"/>
</dbReference>
<dbReference type="ExpressionAtlas" id="Q9C7D7">
    <property type="expression patterns" value="baseline and differential"/>
</dbReference>
<dbReference type="GO" id="GO:0016020">
    <property type="term" value="C:membrane"/>
    <property type="evidence" value="ECO:0007669"/>
    <property type="project" value="UniProtKB-SubCell"/>
</dbReference>
<dbReference type="GO" id="GO:0016192">
    <property type="term" value="P:vesicle-mediated transport"/>
    <property type="evidence" value="ECO:0007669"/>
    <property type="project" value="InterPro"/>
</dbReference>
<dbReference type="InterPro" id="IPR003377">
    <property type="entry name" value="Cornichon"/>
</dbReference>
<dbReference type="PANTHER" id="PTHR12290">
    <property type="entry name" value="CORNICHON-RELATED"/>
    <property type="match status" value="1"/>
</dbReference>
<dbReference type="Pfam" id="PF03311">
    <property type="entry name" value="Cornichon"/>
    <property type="match status" value="1"/>
</dbReference>
<dbReference type="SMART" id="SM01398">
    <property type="entry name" value="Cornichon"/>
    <property type="match status" value="1"/>
</dbReference>
<protein>
    <recommendedName>
        <fullName>Protein cornichon homolog 1</fullName>
    </recommendedName>
</protein>
<evidence type="ECO:0000255" key="1"/>
<evidence type="ECO:0000305" key="2"/>
<gene>
    <name type="ordered locus">At3g12180</name>
    <name type="ORF">F28J15.3</name>
</gene>
<proteinExistence type="evidence at transcript level"/>
<reference key="1">
    <citation type="journal article" date="2000" name="Nature">
        <title>Sequence and analysis of chromosome 3 of the plant Arabidopsis thaliana.</title>
        <authorList>
            <person name="Salanoubat M."/>
            <person name="Lemcke K."/>
            <person name="Rieger M."/>
            <person name="Ansorge W."/>
            <person name="Unseld M."/>
            <person name="Fartmann B."/>
            <person name="Valle G."/>
            <person name="Bloecker H."/>
            <person name="Perez-Alonso M."/>
            <person name="Obermaier B."/>
            <person name="Delseny M."/>
            <person name="Boutry M."/>
            <person name="Grivell L.A."/>
            <person name="Mache R."/>
            <person name="Puigdomenech P."/>
            <person name="De Simone V."/>
            <person name="Choisne N."/>
            <person name="Artiguenave F."/>
            <person name="Robert C."/>
            <person name="Brottier P."/>
            <person name="Wincker P."/>
            <person name="Cattolico L."/>
            <person name="Weissenbach J."/>
            <person name="Saurin W."/>
            <person name="Quetier F."/>
            <person name="Schaefer M."/>
            <person name="Mueller-Auer S."/>
            <person name="Gabel C."/>
            <person name="Fuchs M."/>
            <person name="Benes V."/>
            <person name="Wurmbach E."/>
            <person name="Drzonek H."/>
            <person name="Erfle H."/>
            <person name="Jordan N."/>
            <person name="Bangert S."/>
            <person name="Wiedelmann R."/>
            <person name="Kranz H."/>
            <person name="Voss H."/>
            <person name="Holland R."/>
            <person name="Brandt P."/>
            <person name="Nyakatura G."/>
            <person name="Vezzi A."/>
            <person name="D'Angelo M."/>
            <person name="Pallavicini A."/>
            <person name="Toppo S."/>
            <person name="Simionati B."/>
            <person name="Conrad A."/>
            <person name="Hornischer K."/>
            <person name="Kauer G."/>
            <person name="Loehnert T.-H."/>
            <person name="Nordsiek G."/>
            <person name="Reichelt J."/>
            <person name="Scharfe M."/>
            <person name="Schoen O."/>
            <person name="Bargues M."/>
            <person name="Terol J."/>
            <person name="Climent J."/>
            <person name="Navarro P."/>
            <person name="Collado C."/>
            <person name="Perez-Perez A."/>
            <person name="Ottenwaelder B."/>
            <person name="Duchemin D."/>
            <person name="Cooke R."/>
            <person name="Laudie M."/>
            <person name="Berger-Llauro C."/>
            <person name="Purnelle B."/>
            <person name="Masuy D."/>
            <person name="de Haan M."/>
            <person name="Maarse A.C."/>
            <person name="Alcaraz J.-P."/>
            <person name="Cottet A."/>
            <person name="Casacuberta E."/>
            <person name="Monfort A."/>
            <person name="Argiriou A."/>
            <person name="Flores M."/>
            <person name="Liguori R."/>
            <person name="Vitale D."/>
            <person name="Mannhaupt G."/>
            <person name="Haase D."/>
            <person name="Schoof H."/>
            <person name="Rudd S."/>
            <person name="Zaccaria P."/>
            <person name="Mewes H.-W."/>
            <person name="Mayer K.F.X."/>
            <person name="Kaul S."/>
            <person name="Town C.D."/>
            <person name="Koo H.L."/>
            <person name="Tallon L.J."/>
            <person name="Jenkins J."/>
            <person name="Rooney T."/>
            <person name="Rizzo M."/>
            <person name="Walts A."/>
            <person name="Utterback T."/>
            <person name="Fujii C.Y."/>
            <person name="Shea T.P."/>
            <person name="Creasy T.H."/>
            <person name="Haas B."/>
            <person name="Maiti R."/>
            <person name="Wu D."/>
            <person name="Peterson J."/>
            <person name="Van Aken S."/>
            <person name="Pai G."/>
            <person name="Militscher J."/>
            <person name="Sellers P."/>
            <person name="Gill J.E."/>
            <person name="Feldblyum T.V."/>
            <person name="Preuss D."/>
            <person name="Lin X."/>
            <person name="Nierman W.C."/>
            <person name="Salzberg S.L."/>
            <person name="White O."/>
            <person name="Venter J.C."/>
            <person name="Fraser C.M."/>
            <person name="Kaneko T."/>
            <person name="Nakamura Y."/>
            <person name="Sato S."/>
            <person name="Kato T."/>
            <person name="Asamizu E."/>
            <person name="Sasamoto S."/>
            <person name="Kimura T."/>
            <person name="Idesawa K."/>
            <person name="Kawashima K."/>
            <person name="Kishida Y."/>
            <person name="Kiyokawa C."/>
            <person name="Kohara M."/>
            <person name="Matsumoto M."/>
            <person name="Matsuno A."/>
            <person name="Muraki A."/>
            <person name="Nakayama S."/>
            <person name="Nakazaki N."/>
            <person name="Shinpo S."/>
            <person name="Takeuchi C."/>
            <person name="Wada T."/>
            <person name="Watanabe A."/>
            <person name="Yamada M."/>
            <person name="Yasuda M."/>
            <person name="Tabata S."/>
        </authorList>
    </citation>
    <scope>NUCLEOTIDE SEQUENCE [LARGE SCALE GENOMIC DNA]</scope>
    <source>
        <strain>cv. Columbia</strain>
    </source>
</reference>
<reference key="2">
    <citation type="journal article" date="2017" name="Plant J.">
        <title>Araport11: a complete reannotation of the Arabidopsis thaliana reference genome.</title>
        <authorList>
            <person name="Cheng C.Y."/>
            <person name="Krishnakumar V."/>
            <person name="Chan A.P."/>
            <person name="Thibaud-Nissen F."/>
            <person name="Schobel S."/>
            <person name="Town C.D."/>
        </authorList>
    </citation>
    <scope>GENOME REANNOTATION</scope>
    <source>
        <strain>cv. Columbia</strain>
    </source>
</reference>
<reference key="3">
    <citation type="journal article" date="2003" name="Science">
        <title>Empirical analysis of transcriptional activity in the Arabidopsis genome.</title>
        <authorList>
            <person name="Yamada K."/>
            <person name="Lim J."/>
            <person name="Dale J.M."/>
            <person name="Chen H."/>
            <person name="Shinn P."/>
            <person name="Palm C.J."/>
            <person name="Southwick A.M."/>
            <person name="Wu H.C."/>
            <person name="Kim C.J."/>
            <person name="Nguyen M."/>
            <person name="Pham P.K."/>
            <person name="Cheuk R.F."/>
            <person name="Karlin-Newmann G."/>
            <person name="Liu S.X."/>
            <person name="Lam B."/>
            <person name="Sakano H."/>
            <person name="Wu T."/>
            <person name="Yu G."/>
            <person name="Miranda M."/>
            <person name="Quach H.L."/>
            <person name="Tripp M."/>
            <person name="Chang C.H."/>
            <person name="Lee J.M."/>
            <person name="Toriumi M.J."/>
            <person name="Chan M.M."/>
            <person name="Tang C.C."/>
            <person name="Onodera C.S."/>
            <person name="Deng J.M."/>
            <person name="Akiyama K."/>
            <person name="Ansari Y."/>
            <person name="Arakawa T."/>
            <person name="Banh J."/>
            <person name="Banno F."/>
            <person name="Bowser L."/>
            <person name="Brooks S.Y."/>
            <person name="Carninci P."/>
            <person name="Chao Q."/>
            <person name="Choy N."/>
            <person name="Enju A."/>
            <person name="Goldsmith A.D."/>
            <person name="Gurjal M."/>
            <person name="Hansen N.F."/>
            <person name="Hayashizaki Y."/>
            <person name="Johnson-Hopson C."/>
            <person name="Hsuan V.W."/>
            <person name="Iida K."/>
            <person name="Karnes M."/>
            <person name="Khan S."/>
            <person name="Koesema E."/>
            <person name="Ishida J."/>
            <person name="Jiang P.X."/>
            <person name="Jones T."/>
            <person name="Kawai J."/>
            <person name="Kamiya A."/>
            <person name="Meyers C."/>
            <person name="Nakajima M."/>
            <person name="Narusaka M."/>
            <person name="Seki M."/>
            <person name="Sakurai T."/>
            <person name="Satou M."/>
            <person name="Tamse R."/>
            <person name="Vaysberg M."/>
            <person name="Wallender E.K."/>
            <person name="Wong C."/>
            <person name="Yamamura Y."/>
            <person name="Yuan S."/>
            <person name="Shinozaki K."/>
            <person name="Davis R.W."/>
            <person name="Theologis A."/>
            <person name="Ecker J.R."/>
        </authorList>
    </citation>
    <scope>NUCLEOTIDE SEQUENCE [LARGE SCALE MRNA]</scope>
    <source>
        <strain>cv. Columbia</strain>
    </source>
</reference>
<reference key="4">
    <citation type="submission" date="2006-07" db="EMBL/GenBank/DDBJ databases">
        <title>Large-scale analysis of RIKEN Arabidopsis full-length (RAFL) cDNAs.</title>
        <authorList>
            <person name="Totoki Y."/>
            <person name="Seki M."/>
            <person name="Ishida J."/>
            <person name="Nakajima M."/>
            <person name="Enju A."/>
            <person name="Kamiya A."/>
            <person name="Narusaka M."/>
            <person name="Shin-i T."/>
            <person name="Nakagawa M."/>
            <person name="Sakamoto N."/>
            <person name="Oishi K."/>
            <person name="Kohara Y."/>
            <person name="Kobayashi M."/>
            <person name="Toyoda A."/>
            <person name="Sakaki Y."/>
            <person name="Sakurai T."/>
            <person name="Iida K."/>
            <person name="Akiyama K."/>
            <person name="Satou M."/>
            <person name="Toyoda T."/>
            <person name="Konagaya A."/>
            <person name="Carninci P."/>
            <person name="Kawai J."/>
            <person name="Hayashizaki Y."/>
            <person name="Shinozaki K."/>
        </authorList>
    </citation>
    <scope>NUCLEOTIDE SEQUENCE [LARGE SCALE MRNA]</scope>
    <source>
        <strain>cv. Columbia</strain>
    </source>
</reference>
<accession>Q9C7D7</accession>
<comment type="subcellular location">
    <subcellularLocation>
        <location evidence="2">Membrane</location>
        <topology evidence="2">Multi-pass membrane protein</topology>
    </subcellularLocation>
</comment>
<comment type="similarity">
    <text evidence="2">Belongs to the cornichon family.</text>
</comment>
<name>CNIH1_ARATH</name>